<accession>A9MAS9</accession>
<reference key="1">
    <citation type="submission" date="2007-10" db="EMBL/GenBank/DDBJ databases">
        <title>Brucella canis ATCC 23365 whole genome shotgun sequencing project.</title>
        <authorList>
            <person name="Setubal J.C."/>
            <person name="Bowns C."/>
            <person name="Boyle S."/>
            <person name="Crasta O.R."/>
            <person name="Czar M.J."/>
            <person name="Dharmanolla C."/>
            <person name="Gillespie J.J."/>
            <person name="Kenyon R.W."/>
            <person name="Lu J."/>
            <person name="Mane S."/>
            <person name="Mohapatra S."/>
            <person name="Nagrani S."/>
            <person name="Purkayastha A."/>
            <person name="Rajasimha H.K."/>
            <person name="Shallom J.M."/>
            <person name="Shallom S."/>
            <person name="Shukla M."/>
            <person name="Snyder E.E."/>
            <person name="Sobral B.W."/>
            <person name="Wattam A.R."/>
            <person name="Will R."/>
            <person name="Williams K."/>
            <person name="Yoo H."/>
            <person name="Bruce D."/>
            <person name="Detter C."/>
            <person name="Munk C."/>
            <person name="Brettin T.S."/>
        </authorList>
    </citation>
    <scope>NUCLEOTIDE SEQUENCE [LARGE SCALE GENOMIC DNA]</scope>
    <source>
        <strain>ATCC 23365 / NCTC 10854 / RM-666</strain>
    </source>
</reference>
<name>AROQ_BRUC2</name>
<proteinExistence type="inferred from homology"/>
<gene>
    <name evidence="1" type="primary">aroQ</name>
    <name type="ordered locus">BCAN_A0921</name>
</gene>
<comment type="function">
    <text evidence="1">Catalyzes a trans-dehydration via an enolate intermediate.</text>
</comment>
<comment type="catalytic activity">
    <reaction evidence="1">
        <text>3-dehydroquinate = 3-dehydroshikimate + H2O</text>
        <dbReference type="Rhea" id="RHEA:21096"/>
        <dbReference type="ChEBI" id="CHEBI:15377"/>
        <dbReference type="ChEBI" id="CHEBI:16630"/>
        <dbReference type="ChEBI" id="CHEBI:32364"/>
        <dbReference type="EC" id="4.2.1.10"/>
    </reaction>
</comment>
<comment type="pathway">
    <text evidence="1">Metabolic intermediate biosynthesis; chorismate biosynthesis; chorismate from D-erythrose 4-phosphate and phosphoenolpyruvate: step 3/7.</text>
</comment>
<comment type="subunit">
    <text evidence="1">Homododecamer.</text>
</comment>
<comment type="similarity">
    <text evidence="1">Belongs to the type-II 3-dehydroquinase family.</text>
</comment>
<feature type="chain" id="PRO_1000077029" description="3-dehydroquinate dehydratase">
    <location>
        <begin position="1"/>
        <end position="157"/>
    </location>
</feature>
<feature type="active site" description="Proton acceptor" evidence="1">
    <location>
        <position position="24"/>
    </location>
</feature>
<feature type="active site" description="Proton donor" evidence="1">
    <location>
        <position position="101"/>
    </location>
</feature>
<feature type="binding site" evidence="1">
    <location>
        <position position="75"/>
    </location>
    <ligand>
        <name>substrate</name>
    </ligand>
</feature>
<feature type="binding site" evidence="1">
    <location>
        <position position="81"/>
    </location>
    <ligand>
        <name>substrate</name>
    </ligand>
</feature>
<feature type="binding site" evidence="1">
    <location>
        <position position="88"/>
    </location>
    <ligand>
        <name>substrate</name>
    </ligand>
</feature>
<feature type="binding site" evidence="1">
    <location>
        <begin position="102"/>
        <end position="103"/>
    </location>
    <ligand>
        <name>substrate</name>
    </ligand>
</feature>
<feature type="binding site" evidence="1">
    <location>
        <position position="112"/>
    </location>
    <ligand>
        <name>substrate</name>
    </ligand>
</feature>
<feature type="site" description="Transition state stabilizer" evidence="1">
    <location>
        <position position="19"/>
    </location>
</feature>
<evidence type="ECO:0000255" key="1">
    <source>
        <dbReference type="HAMAP-Rule" id="MF_00169"/>
    </source>
</evidence>
<sequence>MTKTVFVLNGPNLNLLGKREPGIYGVATLDDIEASCKREAGQLELQIDFRQSNHEGDLVSWIQEAGEKNAYVLINPAAYSHTSVAIHDAIRSARVTVVEVHLSNIHAREAFRHHSHVSAVAKGVICGFGAEGYLLGLRALAAIAKEEENNGQSIKGA</sequence>
<organism>
    <name type="scientific">Brucella canis (strain ATCC 23365 / NCTC 10854 / RM-666)</name>
    <dbReference type="NCBI Taxonomy" id="483179"/>
    <lineage>
        <taxon>Bacteria</taxon>
        <taxon>Pseudomonadati</taxon>
        <taxon>Pseudomonadota</taxon>
        <taxon>Alphaproteobacteria</taxon>
        <taxon>Hyphomicrobiales</taxon>
        <taxon>Brucellaceae</taxon>
        <taxon>Brucella/Ochrobactrum group</taxon>
        <taxon>Brucella</taxon>
    </lineage>
</organism>
<keyword id="KW-0028">Amino-acid biosynthesis</keyword>
<keyword id="KW-0057">Aromatic amino acid biosynthesis</keyword>
<keyword id="KW-0456">Lyase</keyword>
<keyword id="KW-1185">Reference proteome</keyword>
<protein>
    <recommendedName>
        <fullName evidence="1">3-dehydroquinate dehydratase</fullName>
        <shortName evidence="1">3-dehydroquinase</shortName>
        <ecNumber evidence="1">4.2.1.10</ecNumber>
    </recommendedName>
    <alternativeName>
        <fullName evidence="1">Type II DHQase</fullName>
    </alternativeName>
</protein>
<dbReference type="EC" id="4.2.1.10" evidence="1"/>
<dbReference type="EMBL" id="CP000872">
    <property type="protein sequence ID" value="ABX61982.1"/>
    <property type="molecule type" value="Genomic_DNA"/>
</dbReference>
<dbReference type="RefSeq" id="WP_002964037.1">
    <property type="nucleotide sequence ID" value="NC_010103.1"/>
</dbReference>
<dbReference type="SMR" id="A9MAS9"/>
<dbReference type="GeneID" id="97533798"/>
<dbReference type="KEGG" id="bcs:BCAN_A0921"/>
<dbReference type="HOGENOM" id="CLU_090968_1_0_5"/>
<dbReference type="PhylomeDB" id="A9MAS9"/>
<dbReference type="UniPathway" id="UPA00053">
    <property type="reaction ID" value="UER00086"/>
</dbReference>
<dbReference type="Proteomes" id="UP000001385">
    <property type="component" value="Chromosome I"/>
</dbReference>
<dbReference type="GO" id="GO:0003855">
    <property type="term" value="F:3-dehydroquinate dehydratase activity"/>
    <property type="evidence" value="ECO:0007669"/>
    <property type="project" value="UniProtKB-UniRule"/>
</dbReference>
<dbReference type="GO" id="GO:0008652">
    <property type="term" value="P:amino acid biosynthetic process"/>
    <property type="evidence" value="ECO:0007669"/>
    <property type="project" value="UniProtKB-KW"/>
</dbReference>
<dbReference type="GO" id="GO:0009073">
    <property type="term" value="P:aromatic amino acid family biosynthetic process"/>
    <property type="evidence" value="ECO:0007669"/>
    <property type="project" value="UniProtKB-KW"/>
</dbReference>
<dbReference type="GO" id="GO:0009423">
    <property type="term" value="P:chorismate biosynthetic process"/>
    <property type="evidence" value="ECO:0007669"/>
    <property type="project" value="UniProtKB-UniRule"/>
</dbReference>
<dbReference type="GO" id="GO:0019631">
    <property type="term" value="P:quinate catabolic process"/>
    <property type="evidence" value="ECO:0007669"/>
    <property type="project" value="TreeGrafter"/>
</dbReference>
<dbReference type="CDD" id="cd00466">
    <property type="entry name" value="DHQase_II"/>
    <property type="match status" value="1"/>
</dbReference>
<dbReference type="Gene3D" id="3.40.50.9100">
    <property type="entry name" value="Dehydroquinase, class II"/>
    <property type="match status" value="1"/>
</dbReference>
<dbReference type="HAMAP" id="MF_00169">
    <property type="entry name" value="AroQ"/>
    <property type="match status" value="1"/>
</dbReference>
<dbReference type="InterPro" id="IPR001874">
    <property type="entry name" value="DHquinase_II"/>
</dbReference>
<dbReference type="InterPro" id="IPR018509">
    <property type="entry name" value="DHquinase_II_CS"/>
</dbReference>
<dbReference type="InterPro" id="IPR036441">
    <property type="entry name" value="DHquinase_II_sf"/>
</dbReference>
<dbReference type="NCBIfam" id="TIGR01088">
    <property type="entry name" value="aroQ"/>
    <property type="match status" value="1"/>
</dbReference>
<dbReference type="NCBIfam" id="NF003805">
    <property type="entry name" value="PRK05395.1-2"/>
    <property type="match status" value="1"/>
</dbReference>
<dbReference type="NCBIfam" id="NF003806">
    <property type="entry name" value="PRK05395.1-3"/>
    <property type="match status" value="1"/>
</dbReference>
<dbReference type="NCBIfam" id="NF003807">
    <property type="entry name" value="PRK05395.1-4"/>
    <property type="match status" value="1"/>
</dbReference>
<dbReference type="PANTHER" id="PTHR21272">
    <property type="entry name" value="CATABOLIC 3-DEHYDROQUINASE"/>
    <property type="match status" value="1"/>
</dbReference>
<dbReference type="PANTHER" id="PTHR21272:SF3">
    <property type="entry name" value="CATABOLIC 3-DEHYDROQUINASE"/>
    <property type="match status" value="1"/>
</dbReference>
<dbReference type="Pfam" id="PF01220">
    <property type="entry name" value="DHquinase_II"/>
    <property type="match status" value="1"/>
</dbReference>
<dbReference type="PIRSF" id="PIRSF001399">
    <property type="entry name" value="DHquinase_II"/>
    <property type="match status" value="1"/>
</dbReference>
<dbReference type="SUPFAM" id="SSF52304">
    <property type="entry name" value="Type II 3-dehydroquinate dehydratase"/>
    <property type="match status" value="1"/>
</dbReference>
<dbReference type="PROSITE" id="PS01029">
    <property type="entry name" value="DEHYDROQUINASE_II"/>
    <property type="match status" value="1"/>
</dbReference>